<name>QUEA_STAAE</name>
<sequence length="341" mass="38969">MNIEEFDYDLPESLIAQTPLKDRDHSRLLVMDRETGEMKHLHFKDIIEYFRPGDTLVLNDTRVMPARLFGLKEETGAKVEMLMLTQIEGNDWEVLLKPAKRIKVGNKLNFGNGKIIAECIKEMDQGGRIMRLHYEGILQERLDELGEMPLPPYIKERLDDPDRYQTVYAKESGSAAAPTAGLHFTDELLIEIKNKGVNIAFVTLHVGLGTFRPVSVDDVNDHEMHSEYYQMTQETADLLNDTKSKGHRIISVGTTSTRTLETIRRDHDKFVETSGWTNIFIYPGFDFKAIDGQITNFHLPKSTLVMLVSAFSSRENVLNAYKTAVNLEYRFFSFGDAMLII</sequence>
<reference key="1">
    <citation type="journal article" date="2008" name="J. Bacteriol.">
        <title>Genome sequence of Staphylococcus aureus strain Newman and comparative analysis of staphylococcal genomes: polymorphism and evolution of two major pathogenicity islands.</title>
        <authorList>
            <person name="Baba T."/>
            <person name="Bae T."/>
            <person name="Schneewind O."/>
            <person name="Takeuchi F."/>
            <person name="Hiramatsu K."/>
        </authorList>
    </citation>
    <scope>NUCLEOTIDE SEQUENCE [LARGE SCALE GENOMIC DNA]</scope>
    <source>
        <strain>Newman</strain>
    </source>
</reference>
<dbReference type="EC" id="2.4.99.17" evidence="1"/>
<dbReference type="EMBL" id="AP009351">
    <property type="protein sequence ID" value="BAF67814.1"/>
    <property type="molecule type" value="Genomic_DNA"/>
</dbReference>
<dbReference type="RefSeq" id="WP_001019172.1">
    <property type="nucleotide sequence ID" value="NZ_JBBIAE010000001.1"/>
</dbReference>
<dbReference type="SMR" id="A6QHI2"/>
<dbReference type="KEGG" id="sae:NWMN_1542"/>
<dbReference type="HOGENOM" id="CLU_039110_1_0_9"/>
<dbReference type="UniPathway" id="UPA00392"/>
<dbReference type="Proteomes" id="UP000006386">
    <property type="component" value="Chromosome"/>
</dbReference>
<dbReference type="GO" id="GO:0005737">
    <property type="term" value="C:cytoplasm"/>
    <property type="evidence" value="ECO:0007669"/>
    <property type="project" value="UniProtKB-SubCell"/>
</dbReference>
<dbReference type="GO" id="GO:0051075">
    <property type="term" value="F:S-adenosylmethionine:tRNA ribosyltransferase-isomerase activity"/>
    <property type="evidence" value="ECO:0007669"/>
    <property type="project" value="UniProtKB-EC"/>
</dbReference>
<dbReference type="GO" id="GO:0008616">
    <property type="term" value="P:queuosine biosynthetic process"/>
    <property type="evidence" value="ECO:0007669"/>
    <property type="project" value="UniProtKB-UniRule"/>
</dbReference>
<dbReference type="GO" id="GO:0002099">
    <property type="term" value="P:tRNA wobble guanine modification"/>
    <property type="evidence" value="ECO:0007669"/>
    <property type="project" value="TreeGrafter"/>
</dbReference>
<dbReference type="FunFam" id="2.40.10.240:FF:000002">
    <property type="entry name" value="S-adenosylmethionine:tRNA ribosyltransferase-isomerase"/>
    <property type="match status" value="1"/>
</dbReference>
<dbReference type="FunFam" id="3.40.1780.10:FF:000001">
    <property type="entry name" value="S-adenosylmethionine:tRNA ribosyltransferase-isomerase"/>
    <property type="match status" value="1"/>
</dbReference>
<dbReference type="Gene3D" id="2.40.10.240">
    <property type="entry name" value="QueA-like"/>
    <property type="match status" value="1"/>
</dbReference>
<dbReference type="Gene3D" id="3.40.1780.10">
    <property type="entry name" value="QueA-like"/>
    <property type="match status" value="1"/>
</dbReference>
<dbReference type="HAMAP" id="MF_00113">
    <property type="entry name" value="QueA"/>
    <property type="match status" value="1"/>
</dbReference>
<dbReference type="InterPro" id="IPR003699">
    <property type="entry name" value="QueA"/>
</dbReference>
<dbReference type="InterPro" id="IPR042118">
    <property type="entry name" value="QueA_dom1"/>
</dbReference>
<dbReference type="InterPro" id="IPR042119">
    <property type="entry name" value="QueA_dom2"/>
</dbReference>
<dbReference type="InterPro" id="IPR036100">
    <property type="entry name" value="QueA_sf"/>
</dbReference>
<dbReference type="NCBIfam" id="NF001140">
    <property type="entry name" value="PRK00147.1"/>
    <property type="match status" value="1"/>
</dbReference>
<dbReference type="NCBIfam" id="TIGR00113">
    <property type="entry name" value="queA"/>
    <property type="match status" value="1"/>
</dbReference>
<dbReference type="PANTHER" id="PTHR30307">
    <property type="entry name" value="S-ADENOSYLMETHIONINE:TRNA RIBOSYLTRANSFERASE-ISOMERASE"/>
    <property type="match status" value="1"/>
</dbReference>
<dbReference type="PANTHER" id="PTHR30307:SF0">
    <property type="entry name" value="S-ADENOSYLMETHIONINE:TRNA RIBOSYLTRANSFERASE-ISOMERASE"/>
    <property type="match status" value="1"/>
</dbReference>
<dbReference type="Pfam" id="PF02547">
    <property type="entry name" value="Queuosine_synth"/>
    <property type="match status" value="1"/>
</dbReference>
<dbReference type="SUPFAM" id="SSF111337">
    <property type="entry name" value="QueA-like"/>
    <property type="match status" value="1"/>
</dbReference>
<organism>
    <name type="scientific">Staphylococcus aureus (strain Newman)</name>
    <dbReference type="NCBI Taxonomy" id="426430"/>
    <lineage>
        <taxon>Bacteria</taxon>
        <taxon>Bacillati</taxon>
        <taxon>Bacillota</taxon>
        <taxon>Bacilli</taxon>
        <taxon>Bacillales</taxon>
        <taxon>Staphylococcaceae</taxon>
        <taxon>Staphylococcus</taxon>
    </lineage>
</organism>
<evidence type="ECO:0000255" key="1">
    <source>
        <dbReference type="HAMAP-Rule" id="MF_00113"/>
    </source>
</evidence>
<keyword id="KW-0963">Cytoplasm</keyword>
<keyword id="KW-0671">Queuosine biosynthesis</keyword>
<keyword id="KW-0949">S-adenosyl-L-methionine</keyword>
<keyword id="KW-0808">Transferase</keyword>
<accession>A6QHI2</accession>
<protein>
    <recommendedName>
        <fullName evidence="1">S-adenosylmethionine:tRNA ribosyltransferase-isomerase</fullName>
        <ecNumber evidence="1">2.4.99.17</ecNumber>
    </recommendedName>
    <alternativeName>
        <fullName evidence="1">Queuosine biosynthesis protein QueA</fullName>
    </alternativeName>
</protein>
<feature type="chain" id="PRO_1000071342" description="S-adenosylmethionine:tRNA ribosyltransferase-isomerase">
    <location>
        <begin position="1"/>
        <end position="341"/>
    </location>
</feature>
<proteinExistence type="inferred from homology"/>
<comment type="function">
    <text evidence="1">Transfers and isomerizes the ribose moiety from AdoMet to the 7-aminomethyl group of 7-deazaguanine (preQ1-tRNA) to give epoxyqueuosine (oQ-tRNA).</text>
</comment>
<comment type="catalytic activity">
    <reaction evidence="1">
        <text>7-aminomethyl-7-carbaguanosine(34) in tRNA + S-adenosyl-L-methionine = epoxyqueuosine(34) in tRNA + adenine + L-methionine + 2 H(+)</text>
        <dbReference type="Rhea" id="RHEA:32155"/>
        <dbReference type="Rhea" id="RHEA-COMP:10342"/>
        <dbReference type="Rhea" id="RHEA-COMP:18582"/>
        <dbReference type="ChEBI" id="CHEBI:15378"/>
        <dbReference type="ChEBI" id="CHEBI:16708"/>
        <dbReference type="ChEBI" id="CHEBI:57844"/>
        <dbReference type="ChEBI" id="CHEBI:59789"/>
        <dbReference type="ChEBI" id="CHEBI:82833"/>
        <dbReference type="ChEBI" id="CHEBI:194443"/>
        <dbReference type="EC" id="2.4.99.17"/>
    </reaction>
</comment>
<comment type="pathway">
    <text evidence="1">tRNA modification; tRNA-queuosine biosynthesis.</text>
</comment>
<comment type="subunit">
    <text evidence="1">Monomer.</text>
</comment>
<comment type="subcellular location">
    <subcellularLocation>
        <location evidence="1">Cytoplasm</location>
    </subcellularLocation>
</comment>
<comment type="similarity">
    <text evidence="1">Belongs to the QueA family.</text>
</comment>
<gene>
    <name evidence="1" type="primary">queA</name>
    <name type="ordered locus">NWMN_1542</name>
</gene>